<feature type="chain" id="PRO_0000329692" description="Polyribonucleotide nucleotidyltransferase">
    <location>
        <begin position="1"/>
        <end position="729"/>
    </location>
</feature>
<feature type="domain" description="KH" evidence="1">
    <location>
        <begin position="552"/>
        <end position="611"/>
    </location>
</feature>
<feature type="domain" description="S1 motif" evidence="1">
    <location>
        <begin position="621"/>
        <end position="689"/>
    </location>
</feature>
<feature type="binding site" evidence="1">
    <location>
        <position position="485"/>
    </location>
    <ligand>
        <name>Mg(2+)</name>
        <dbReference type="ChEBI" id="CHEBI:18420"/>
    </ligand>
</feature>
<feature type="binding site" evidence="1">
    <location>
        <position position="491"/>
    </location>
    <ligand>
        <name>Mg(2+)</name>
        <dbReference type="ChEBI" id="CHEBI:18420"/>
    </ligand>
</feature>
<evidence type="ECO:0000255" key="1">
    <source>
        <dbReference type="HAMAP-Rule" id="MF_01595"/>
    </source>
</evidence>
<proteinExistence type="inferred from homology"/>
<keyword id="KW-0963">Cytoplasm</keyword>
<keyword id="KW-0460">Magnesium</keyword>
<keyword id="KW-0479">Metal-binding</keyword>
<keyword id="KW-0548">Nucleotidyltransferase</keyword>
<keyword id="KW-0694">RNA-binding</keyword>
<keyword id="KW-0808">Transferase</keyword>
<reference key="1">
    <citation type="submission" date="2006-11" db="EMBL/GenBank/DDBJ databases">
        <title>Identification and characterization of a new conjugation/ type IVA secretion system (trb/tra) of L. pneumophila Corby localized on a mobile genomic island.</title>
        <authorList>
            <person name="Gloeckner G."/>
            <person name="Albert-Weissenberger C."/>
            <person name="Weinmann E."/>
            <person name="Jacobi S."/>
            <person name="Schunder E."/>
            <person name="Steinert M."/>
            <person name="Buchrieser C."/>
            <person name="Hacker J."/>
            <person name="Heuner K."/>
        </authorList>
    </citation>
    <scope>NUCLEOTIDE SEQUENCE [LARGE SCALE GENOMIC DNA]</scope>
    <source>
        <strain>Corby</strain>
    </source>
</reference>
<comment type="function">
    <text evidence="1">Involved in mRNA degradation. Catalyzes the phosphorolysis of single-stranded polyribonucleotides processively in the 3'- to 5'-direction.</text>
</comment>
<comment type="catalytic activity">
    <reaction evidence="1">
        <text>RNA(n+1) + phosphate = RNA(n) + a ribonucleoside 5'-diphosphate</text>
        <dbReference type="Rhea" id="RHEA:22096"/>
        <dbReference type="Rhea" id="RHEA-COMP:14527"/>
        <dbReference type="Rhea" id="RHEA-COMP:17342"/>
        <dbReference type="ChEBI" id="CHEBI:43474"/>
        <dbReference type="ChEBI" id="CHEBI:57930"/>
        <dbReference type="ChEBI" id="CHEBI:140395"/>
        <dbReference type="EC" id="2.7.7.8"/>
    </reaction>
</comment>
<comment type="cofactor">
    <cofactor evidence="1">
        <name>Mg(2+)</name>
        <dbReference type="ChEBI" id="CHEBI:18420"/>
    </cofactor>
</comment>
<comment type="subunit">
    <text evidence="1">Component of the RNA degradosome, which is a multiprotein complex involved in RNA processing and mRNA degradation.</text>
</comment>
<comment type="subcellular location">
    <subcellularLocation>
        <location evidence="1">Cytoplasm</location>
    </subcellularLocation>
</comment>
<comment type="similarity">
    <text evidence="1">Belongs to the polyribonucleotide nucleotidyltransferase family.</text>
</comment>
<accession>A5IHU3</accession>
<organism>
    <name type="scientific">Legionella pneumophila (strain Corby)</name>
    <dbReference type="NCBI Taxonomy" id="400673"/>
    <lineage>
        <taxon>Bacteria</taxon>
        <taxon>Pseudomonadati</taxon>
        <taxon>Pseudomonadota</taxon>
        <taxon>Gammaproteobacteria</taxon>
        <taxon>Legionellales</taxon>
        <taxon>Legionellaceae</taxon>
        <taxon>Legionella</taxon>
    </lineage>
</organism>
<protein>
    <recommendedName>
        <fullName evidence="1">Polyribonucleotide nucleotidyltransferase</fullName>
        <ecNumber evidence="1">2.7.7.8</ecNumber>
    </recommendedName>
    <alternativeName>
        <fullName evidence="1">Polynucleotide phosphorylase</fullName>
        <shortName evidence="1">PNPase</shortName>
    </alternativeName>
</protein>
<name>PNP_LEGPC</name>
<gene>
    <name evidence="1" type="primary">pnp</name>
    <name type="ordered locus">LPC_3053</name>
</gene>
<sequence length="729" mass="80121">MAKITKEIVFGNHNLILETGEVARQADGAVMASMNGTQVLVTVVWKKDGGESNDFFPLTVNYQEKFYAIGKIPGGFNKREGRPSDNETLISRLIDRPIRPLFPDNFFNEVQIIATVLSLNPEVSPDIIAMIGASAALSISGVPFNGPIGAARVGYKDGVYLLNPSRKEQEESKLDLVIAGTKDAILMVESEAQELSEDIMRGAMLYGHEMMKNVIKSIEELAREVGKSKPEWKAPEIDTVLKARINDVARNEVEAAYLIKDKQQRYQRLDELREQTISALLAENDELNADVIANMFGELERSIVRNRILDGEPRIDGRDHRTVRPISIRTKFLERTHGSCLFTRGETQAIVVATLGNERDAQILDGISGESRDRFMLHYNFPPYSVGETGQVGSPKRREIGHGRLAKRALMAVLPDANEFPYVLRIVSEITESNGSSSMATVCGTSLALMDAGVPLKAPVAGVAMGLIKEGDRYAVLTDILGDEDHLGDMDFKVAGTEKGITALQMDIKISGITNEIMEQALEQALEGRTHILGVMNNALAEHRTELSQHAPRITTMKVAEDKIRTIIGKGGATIKGLIESTGVSIDIDDSGVIQLFSPDKMALEEAQKQIKALIAEIEVGQTYQGKVSKIVDFGAFINLLPGKDGLLHISQICADRTQKVEEVLQEGQEIEVFVAGIDKQGRVKLEWKDKPQAEAKEVEDAPVSATFLTMEEQSEEINSGNKISEEEE</sequence>
<dbReference type="EC" id="2.7.7.8" evidence="1"/>
<dbReference type="EMBL" id="CP000675">
    <property type="protein sequence ID" value="ABQ56943.1"/>
    <property type="molecule type" value="Genomic_DNA"/>
</dbReference>
<dbReference type="RefSeq" id="WP_011947661.1">
    <property type="nucleotide sequence ID" value="NZ_JAPMSS010000004.1"/>
</dbReference>
<dbReference type="SMR" id="A5IHU3"/>
<dbReference type="KEGG" id="lpc:LPC_3053"/>
<dbReference type="HOGENOM" id="CLU_004217_2_2_6"/>
<dbReference type="GO" id="GO:0005829">
    <property type="term" value="C:cytosol"/>
    <property type="evidence" value="ECO:0007669"/>
    <property type="project" value="TreeGrafter"/>
</dbReference>
<dbReference type="GO" id="GO:0000175">
    <property type="term" value="F:3'-5'-RNA exonuclease activity"/>
    <property type="evidence" value="ECO:0007669"/>
    <property type="project" value="TreeGrafter"/>
</dbReference>
<dbReference type="GO" id="GO:0000287">
    <property type="term" value="F:magnesium ion binding"/>
    <property type="evidence" value="ECO:0007669"/>
    <property type="project" value="UniProtKB-UniRule"/>
</dbReference>
<dbReference type="GO" id="GO:0004654">
    <property type="term" value="F:polyribonucleotide nucleotidyltransferase activity"/>
    <property type="evidence" value="ECO:0007669"/>
    <property type="project" value="UniProtKB-UniRule"/>
</dbReference>
<dbReference type="GO" id="GO:0003723">
    <property type="term" value="F:RNA binding"/>
    <property type="evidence" value="ECO:0007669"/>
    <property type="project" value="UniProtKB-UniRule"/>
</dbReference>
<dbReference type="GO" id="GO:0006402">
    <property type="term" value="P:mRNA catabolic process"/>
    <property type="evidence" value="ECO:0007669"/>
    <property type="project" value="UniProtKB-UniRule"/>
</dbReference>
<dbReference type="GO" id="GO:0006396">
    <property type="term" value="P:RNA processing"/>
    <property type="evidence" value="ECO:0007669"/>
    <property type="project" value="InterPro"/>
</dbReference>
<dbReference type="CDD" id="cd02393">
    <property type="entry name" value="KH-I_PNPase"/>
    <property type="match status" value="1"/>
</dbReference>
<dbReference type="CDD" id="cd11363">
    <property type="entry name" value="RNase_PH_PNPase_1"/>
    <property type="match status" value="1"/>
</dbReference>
<dbReference type="CDD" id="cd11364">
    <property type="entry name" value="RNase_PH_PNPase_2"/>
    <property type="match status" value="1"/>
</dbReference>
<dbReference type="CDD" id="cd04472">
    <property type="entry name" value="S1_PNPase"/>
    <property type="match status" value="1"/>
</dbReference>
<dbReference type="FunFam" id="3.30.1370.10:FF:000001">
    <property type="entry name" value="Polyribonucleotide nucleotidyltransferase"/>
    <property type="match status" value="1"/>
</dbReference>
<dbReference type="FunFam" id="3.30.230.70:FF:000001">
    <property type="entry name" value="Polyribonucleotide nucleotidyltransferase"/>
    <property type="match status" value="1"/>
</dbReference>
<dbReference type="FunFam" id="3.30.230.70:FF:000002">
    <property type="entry name" value="Polyribonucleotide nucleotidyltransferase"/>
    <property type="match status" value="1"/>
</dbReference>
<dbReference type="FunFam" id="2.40.50.140:FF:000189">
    <property type="entry name" value="Polyribonucleotide nucleotidyltransferase, putative"/>
    <property type="match status" value="1"/>
</dbReference>
<dbReference type="Gene3D" id="3.30.230.70">
    <property type="entry name" value="GHMP Kinase, N-terminal domain"/>
    <property type="match status" value="2"/>
</dbReference>
<dbReference type="Gene3D" id="3.30.1370.10">
    <property type="entry name" value="K Homology domain, type 1"/>
    <property type="match status" value="1"/>
</dbReference>
<dbReference type="Gene3D" id="2.40.50.140">
    <property type="entry name" value="Nucleic acid-binding proteins"/>
    <property type="match status" value="1"/>
</dbReference>
<dbReference type="HAMAP" id="MF_01595">
    <property type="entry name" value="PNPase"/>
    <property type="match status" value="1"/>
</dbReference>
<dbReference type="InterPro" id="IPR001247">
    <property type="entry name" value="ExoRNase_PH_dom1"/>
</dbReference>
<dbReference type="InterPro" id="IPR015847">
    <property type="entry name" value="ExoRNase_PH_dom2"/>
</dbReference>
<dbReference type="InterPro" id="IPR036345">
    <property type="entry name" value="ExoRNase_PH_dom2_sf"/>
</dbReference>
<dbReference type="InterPro" id="IPR004087">
    <property type="entry name" value="KH_dom"/>
</dbReference>
<dbReference type="InterPro" id="IPR004088">
    <property type="entry name" value="KH_dom_type_1"/>
</dbReference>
<dbReference type="InterPro" id="IPR036612">
    <property type="entry name" value="KH_dom_type_1_sf"/>
</dbReference>
<dbReference type="InterPro" id="IPR012340">
    <property type="entry name" value="NA-bd_OB-fold"/>
</dbReference>
<dbReference type="InterPro" id="IPR012162">
    <property type="entry name" value="PNPase"/>
</dbReference>
<dbReference type="InterPro" id="IPR027408">
    <property type="entry name" value="PNPase/RNase_PH_dom_sf"/>
</dbReference>
<dbReference type="InterPro" id="IPR015848">
    <property type="entry name" value="PNPase_PH_RNA-bd_bac/org-type"/>
</dbReference>
<dbReference type="InterPro" id="IPR020568">
    <property type="entry name" value="Ribosomal_Su5_D2-typ_SF"/>
</dbReference>
<dbReference type="InterPro" id="IPR003029">
    <property type="entry name" value="S1_domain"/>
</dbReference>
<dbReference type="NCBIfam" id="TIGR03591">
    <property type="entry name" value="polynuc_phos"/>
    <property type="match status" value="1"/>
</dbReference>
<dbReference type="NCBIfam" id="NF008805">
    <property type="entry name" value="PRK11824.1"/>
    <property type="match status" value="1"/>
</dbReference>
<dbReference type="PANTHER" id="PTHR11252">
    <property type="entry name" value="POLYRIBONUCLEOTIDE NUCLEOTIDYLTRANSFERASE"/>
    <property type="match status" value="1"/>
</dbReference>
<dbReference type="PANTHER" id="PTHR11252:SF0">
    <property type="entry name" value="POLYRIBONUCLEOTIDE NUCLEOTIDYLTRANSFERASE 1, MITOCHONDRIAL"/>
    <property type="match status" value="1"/>
</dbReference>
<dbReference type="Pfam" id="PF00013">
    <property type="entry name" value="KH_1"/>
    <property type="match status" value="1"/>
</dbReference>
<dbReference type="Pfam" id="PF03726">
    <property type="entry name" value="PNPase"/>
    <property type="match status" value="1"/>
</dbReference>
<dbReference type="Pfam" id="PF01138">
    <property type="entry name" value="RNase_PH"/>
    <property type="match status" value="2"/>
</dbReference>
<dbReference type="Pfam" id="PF03725">
    <property type="entry name" value="RNase_PH_C"/>
    <property type="match status" value="2"/>
</dbReference>
<dbReference type="Pfam" id="PF00575">
    <property type="entry name" value="S1"/>
    <property type="match status" value="1"/>
</dbReference>
<dbReference type="PIRSF" id="PIRSF005499">
    <property type="entry name" value="PNPase"/>
    <property type="match status" value="1"/>
</dbReference>
<dbReference type="SMART" id="SM00322">
    <property type="entry name" value="KH"/>
    <property type="match status" value="1"/>
</dbReference>
<dbReference type="SMART" id="SM00316">
    <property type="entry name" value="S1"/>
    <property type="match status" value="1"/>
</dbReference>
<dbReference type="SUPFAM" id="SSF54791">
    <property type="entry name" value="Eukaryotic type KH-domain (KH-domain type I)"/>
    <property type="match status" value="1"/>
</dbReference>
<dbReference type="SUPFAM" id="SSF50249">
    <property type="entry name" value="Nucleic acid-binding proteins"/>
    <property type="match status" value="1"/>
</dbReference>
<dbReference type="SUPFAM" id="SSF55666">
    <property type="entry name" value="Ribonuclease PH domain 2-like"/>
    <property type="match status" value="2"/>
</dbReference>
<dbReference type="SUPFAM" id="SSF54211">
    <property type="entry name" value="Ribosomal protein S5 domain 2-like"/>
    <property type="match status" value="2"/>
</dbReference>
<dbReference type="PROSITE" id="PS50084">
    <property type="entry name" value="KH_TYPE_1"/>
    <property type="match status" value="1"/>
</dbReference>
<dbReference type="PROSITE" id="PS50126">
    <property type="entry name" value="S1"/>
    <property type="match status" value="1"/>
</dbReference>